<organism>
    <name type="scientific">Nocardia farcinica (strain IFM 10152)</name>
    <dbReference type="NCBI Taxonomy" id="247156"/>
    <lineage>
        <taxon>Bacteria</taxon>
        <taxon>Bacillati</taxon>
        <taxon>Actinomycetota</taxon>
        <taxon>Actinomycetes</taxon>
        <taxon>Mycobacteriales</taxon>
        <taxon>Nocardiaceae</taxon>
        <taxon>Nocardia</taxon>
    </lineage>
</organism>
<proteinExistence type="inferred from homology"/>
<keyword id="KW-0049">Antioxidant</keyword>
<keyword id="KW-1015">Disulfide bond</keyword>
<keyword id="KW-0560">Oxidoreductase</keyword>
<keyword id="KW-0575">Peroxidase</keyword>
<keyword id="KW-0676">Redox-active center</keyword>
<keyword id="KW-1185">Reference proteome</keyword>
<sequence length="179" mass="18986">MSIENLKNSLPEYAKDLKLNLSSIARSTVLNEQQLWGTLLASAAATRSATTLREIAEEAADVLSAEAYNAALGAASIMGMNNVFYRGKAFLGGRYDDLRAGLRMQIIGNPGVDKADFELWSFAVSSINGCAHCLEAHEHTLREAGVSREVIFESLRVAAIVAGVGQAVQSTEALAAAAV</sequence>
<dbReference type="EC" id="1.11.1.28" evidence="2"/>
<dbReference type="EMBL" id="AP006618">
    <property type="protein sequence ID" value="BAD58638.1"/>
    <property type="molecule type" value="Genomic_DNA"/>
</dbReference>
<dbReference type="RefSeq" id="WP_011210323.1">
    <property type="nucleotide sequence ID" value="NC_006361.1"/>
</dbReference>
<dbReference type="SMR" id="Q5YT53"/>
<dbReference type="STRING" id="247156.NFA_37900"/>
<dbReference type="PeroxiBase" id="4583">
    <property type="entry name" value="NfaAhpD"/>
</dbReference>
<dbReference type="GeneID" id="61134483"/>
<dbReference type="KEGG" id="nfa:NFA_37900"/>
<dbReference type="eggNOG" id="COG0599">
    <property type="taxonomic scope" value="Bacteria"/>
</dbReference>
<dbReference type="HOGENOM" id="CLU_105328_0_0_11"/>
<dbReference type="OrthoDB" id="9801997at2"/>
<dbReference type="Proteomes" id="UP000006820">
    <property type="component" value="Chromosome"/>
</dbReference>
<dbReference type="GO" id="GO:0008785">
    <property type="term" value="F:alkyl hydroperoxide reductase activity"/>
    <property type="evidence" value="ECO:0007669"/>
    <property type="project" value="UniProtKB-UniRule"/>
</dbReference>
<dbReference type="GO" id="GO:0015036">
    <property type="term" value="F:disulfide oxidoreductase activity"/>
    <property type="evidence" value="ECO:0007669"/>
    <property type="project" value="TreeGrafter"/>
</dbReference>
<dbReference type="GO" id="GO:0032843">
    <property type="term" value="F:hydroperoxide reductase activity"/>
    <property type="evidence" value="ECO:0007669"/>
    <property type="project" value="InterPro"/>
</dbReference>
<dbReference type="GO" id="GO:0051920">
    <property type="term" value="F:peroxiredoxin activity"/>
    <property type="evidence" value="ECO:0007669"/>
    <property type="project" value="InterPro"/>
</dbReference>
<dbReference type="GO" id="GO:0045454">
    <property type="term" value="P:cell redox homeostasis"/>
    <property type="evidence" value="ECO:0007669"/>
    <property type="project" value="TreeGrafter"/>
</dbReference>
<dbReference type="GO" id="GO:0006979">
    <property type="term" value="P:response to oxidative stress"/>
    <property type="evidence" value="ECO:0007669"/>
    <property type="project" value="InterPro"/>
</dbReference>
<dbReference type="Gene3D" id="1.20.1290.10">
    <property type="entry name" value="AhpD-like"/>
    <property type="match status" value="1"/>
</dbReference>
<dbReference type="HAMAP" id="MF_01676">
    <property type="entry name" value="AhpD"/>
    <property type="match status" value="1"/>
</dbReference>
<dbReference type="InterPro" id="IPR004674">
    <property type="entry name" value="AhpD"/>
</dbReference>
<dbReference type="InterPro" id="IPR029032">
    <property type="entry name" value="AhpD-like"/>
</dbReference>
<dbReference type="InterPro" id="IPR004675">
    <property type="entry name" value="AhpD_core"/>
</dbReference>
<dbReference type="InterPro" id="IPR003779">
    <property type="entry name" value="CMD-like"/>
</dbReference>
<dbReference type="NCBIfam" id="TIGR00777">
    <property type="entry name" value="ahpD"/>
    <property type="match status" value="1"/>
</dbReference>
<dbReference type="NCBIfam" id="TIGR00778">
    <property type="entry name" value="ahpD_dom"/>
    <property type="match status" value="1"/>
</dbReference>
<dbReference type="PANTHER" id="PTHR33930">
    <property type="entry name" value="ALKYL HYDROPEROXIDE REDUCTASE AHPD"/>
    <property type="match status" value="1"/>
</dbReference>
<dbReference type="PANTHER" id="PTHR33930:SF7">
    <property type="entry name" value="ALKYL HYDROPEROXIDE REDUCTASE AHPD"/>
    <property type="match status" value="1"/>
</dbReference>
<dbReference type="Pfam" id="PF02627">
    <property type="entry name" value="CMD"/>
    <property type="match status" value="1"/>
</dbReference>
<dbReference type="SUPFAM" id="SSF69118">
    <property type="entry name" value="AhpD-like"/>
    <property type="match status" value="1"/>
</dbReference>
<gene>
    <name evidence="2" type="primary">ahpD</name>
    <name type="ordered locus">NFA_37900</name>
</gene>
<accession>Q5YT53</accession>
<evidence type="ECO:0000250" key="1"/>
<evidence type="ECO:0000255" key="2">
    <source>
        <dbReference type="HAMAP-Rule" id="MF_01676"/>
    </source>
</evidence>
<reference key="1">
    <citation type="journal article" date="2004" name="Proc. Natl. Acad. Sci. U.S.A.">
        <title>The complete genomic sequence of Nocardia farcinica IFM 10152.</title>
        <authorList>
            <person name="Ishikawa J."/>
            <person name="Yamashita A."/>
            <person name="Mikami Y."/>
            <person name="Hoshino Y."/>
            <person name="Kurita H."/>
            <person name="Hotta K."/>
            <person name="Shiba T."/>
            <person name="Hattori M."/>
        </authorList>
    </citation>
    <scope>NUCLEOTIDE SEQUENCE [LARGE SCALE GENOMIC DNA]</scope>
    <source>
        <strain>IFM 10152</strain>
    </source>
</reference>
<protein>
    <recommendedName>
        <fullName evidence="2">Alkyl hydroperoxide reductase AhpD</fullName>
        <ecNumber evidence="2">1.11.1.28</ecNumber>
    </recommendedName>
    <alternativeName>
        <fullName evidence="2">Alkylhydroperoxidase AhpD</fullName>
    </alternativeName>
</protein>
<comment type="function">
    <text evidence="2">Antioxidant protein with alkyl hydroperoxidase activity. Required for the reduction of the AhpC active site cysteine residues and for the regeneration of the AhpC enzyme activity.</text>
</comment>
<comment type="catalytic activity">
    <reaction evidence="2">
        <text>N(6)-[(R)-dihydrolipoyl]-L-lysyl-[lipoyl-carrier protein] + a hydroperoxide = N(6)-[(R)-lipoyl]-L-lysyl-[lipoyl-carrier protein] + an alcohol + H2O</text>
        <dbReference type="Rhea" id="RHEA:62636"/>
        <dbReference type="Rhea" id="RHEA-COMP:10502"/>
        <dbReference type="Rhea" id="RHEA-COMP:16355"/>
        <dbReference type="ChEBI" id="CHEBI:15377"/>
        <dbReference type="ChEBI" id="CHEBI:30879"/>
        <dbReference type="ChEBI" id="CHEBI:35924"/>
        <dbReference type="ChEBI" id="CHEBI:83099"/>
        <dbReference type="ChEBI" id="CHEBI:83100"/>
        <dbReference type="EC" id="1.11.1.28"/>
    </reaction>
</comment>
<comment type="subunit">
    <text evidence="2">Homotrimer.</text>
</comment>
<comment type="similarity">
    <text evidence="2">Belongs to the AhpD family.</text>
</comment>
<name>AHPD_NOCFA</name>
<feature type="chain" id="PRO_0000359502" description="Alkyl hydroperoxide reductase AhpD">
    <location>
        <begin position="1"/>
        <end position="179"/>
    </location>
</feature>
<feature type="active site" description="Proton donor" evidence="2">
    <location>
        <position position="130"/>
    </location>
</feature>
<feature type="active site" description="Cysteine sulfenic acid (-SOH) intermediate" evidence="2">
    <location>
        <position position="133"/>
    </location>
</feature>
<feature type="disulfide bond" evidence="1">
    <location>
        <begin position="130"/>
        <end position="133"/>
    </location>
</feature>
<feature type="disulfide bond" description="Interchain (with AhpC); in linked form" evidence="2">
    <location>
        <position position="133"/>
    </location>
</feature>